<reference key="1">
    <citation type="journal article" date="2005" name="J. Bacteriol.">
        <title>Insights on evolution of virulence and resistance from the complete genome analysis of an early methicillin-resistant Staphylococcus aureus strain and a biofilm-producing methicillin-resistant Staphylococcus epidermidis strain.</title>
        <authorList>
            <person name="Gill S.R."/>
            <person name="Fouts D.E."/>
            <person name="Archer G.L."/>
            <person name="Mongodin E.F."/>
            <person name="DeBoy R.T."/>
            <person name="Ravel J."/>
            <person name="Paulsen I.T."/>
            <person name="Kolonay J.F."/>
            <person name="Brinkac L.M."/>
            <person name="Beanan M.J."/>
            <person name="Dodson R.J."/>
            <person name="Daugherty S.C."/>
            <person name="Madupu R."/>
            <person name="Angiuoli S.V."/>
            <person name="Durkin A.S."/>
            <person name="Haft D.H."/>
            <person name="Vamathevan J.J."/>
            <person name="Khouri H."/>
            <person name="Utterback T.R."/>
            <person name="Lee C."/>
            <person name="Dimitrov G."/>
            <person name="Jiang L."/>
            <person name="Qin H."/>
            <person name="Weidman J."/>
            <person name="Tran K."/>
            <person name="Kang K.H."/>
            <person name="Hance I.R."/>
            <person name="Nelson K.E."/>
            <person name="Fraser C.M."/>
        </authorList>
    </citation>
    <scope>NUCLEOTIDE SEQUENCE [LARGE SCALE GENOMIC DNA]</scope>
    <source>
        <strain>ATCC 35984 / DSM 28319 / BCRC 17069 / CCUG 31568 / BM 3577 / RP62A</strain>
    </source>
</reference>
<gene>
    <name evidence="1" type="primary">trpB</name>
    <name type="ordered locus">SERP0942</name>
</gene>
<proteinExistence type="inferred from homology"/>
<feature type="chain" id="PRO_0000099004" description="Tryptophan synthase beta chain">
    <location>
        <begin position="1"/>
        <end position="402"/>
    </location>
</feature>
<feature type="modified residue" description="N6-(pyridoxal phosphate)lysine" evidence="1">
    <location>
        <position position="92"/>
    </location>
</feature>
<organism>
    <name type="scientific">Staphylococcus epidermidis (strain ATCC 35984 / DSM 28319 / BCRC 17069 / CCUG 31568 / BM 3577 / RP62A)</name>
    <dbReference type="NCBI Taxonomy" id="176279"/>
    <lineage>
        <taxon>Bacteria</taxon>
        <taxon>Bacillati</taxon>
        <taxon>Bacillota</taxon>
        <taxon>Bacilli</taxon>
        <taxon>Bacillales</taxon>
        <taxon>Staphylococcaceae</taxon>
        <taxon>Staphylococcus</taxon>
    </lineage>
</organism>
<accession>Q5HPH0</accession>
<name>TRPB_STAEQ</name>
<protein>
    <recommendedName>
        <fullName evidence="1">Tryptophan synthase beta chain</fullName>
        <ecNumber evidence="1">4.2.1.20</ecNumber>
    </recommendedName>
</protein>
<comment type="function">
    <text evidence="1">The beta subunit is responsible for the synthesis of L-tryptophan from indole and L-serine.</text>
</comment>
<comment type="catalytic activity">
    <reaction evidence="1">
        <text>(1S,2R)-1-C-(indol-3-yl)glycerol 3-phosphate + L-serine = D-glyceraldehyde 3-phosphate + L-tryptophan + H2O</text>
        <dbReference type="Rhea" id="RHEA:10532"/>
        <dbReference type="ChEBI" id="CHEBI:15377"/>
        <dbReference type="ChEBI" id="CHEBI:33384"/>
        <dbReference type="ChEBI" id="CHEBI:57912"/>
        <dbReference type="ChEBI" id="CHEBI:58866"/>
        <dbReference type="ChEBI" id="CHEBI:59776"/>
        <dbReference type="EC" id="4.2.1.20"/>
    </reaction>
</comment>
<comment type="cofactor">
    <cofactor evidence="1">
        <name>pyridoxal 5'-phosphate</name>
        <dbReference type="ChEBI" id="CHEBI:597326"/>
    </cofactor>
</comment>
<comment type="pathway">
    <text evidence="1">Amino-acid biosynthesis; L-tryptophan biosynthesis; L-tryptophan from chorismate: step 5/5.</text>
</comment>
<comment type="subunit">
    <text evidence="1">Tetramer of two alpha and two beta chains.</text>
</comment>
<comment type="similarity">
    <text evidence="1">Belongs to the TrpB family.</text>
</comment>
<dbReference type="EC" id="4.2.1.20" evidence="1"/>
<dbReference type="EMBL" id="CP000029">
    <property type="protein sequence ID" value="AAW54339.1"/>
    <property type="molecule type" value="Genomic_DNA"/>
</dbReference>
<dbReference type="RefSeq" id="WP_001831324.1">
    <property type="nucleotide sequence ID" value="NC_002976.3"/>
</dbReference>
<dbReference type="SMR" id="Q5HPH0"/>
<dbReference type="STRING" id="176279.SERP0942"/>
<dbReference type="GeneID" id="50018820"/>
<dbReference type="KEGG" id="ser:SERP0942"/>
<dbReference type="eggNOG" id="COG0133">
    <property type="taxonomic scope" value="Bacteria"/>
</dbReference>
<dbReference type="HOGENOM" id="CLU_016734_3_1_9"/>
<dbReference type="UniPathway" id="UPA00035">
    <property type="reaction ID" value="UER00044"/>
</dbReference>
<dbReference type="Proteomes" id="UP000000531">
    <property type="component" value="Chromosome"/>
</dbReference>
<dbReference type="GO" id="GO:0005737">
    <property type="term" value="C:cytoplasm"/>
    <property type="evidence" value="ECO:0007669"/>
    <property type="project" value="TreeGrafter"/>
</dbReference>
<dbReference type="GO" id="GO:0004834">
    <property type="term" value="F:tryptophan synthase activity"/>
    <property type="evidence" value="ECO:0007669"/>
    <property type="project" value="UniProtKB-UniRule"/>
</dbReference>
<dbReference type="CDD" id="cd06446">
    <property type="entry name" value="Trp-synth_B"/>
    <property type="match status" value="1"/>
</dbReference>
<dbReference type="FunFam" id="3.40.50.1100:FF:000001">
    <property type="entry name" value="Tryptophan synthase beta chain"/>
    <property type="match status" value="1"/>
</dbReference>
<dbReference type="FunFam" id="3.40.50.1100:FF:000004">
    <property type="entry name" value="Tryptophan synthase beta chain"/>
    <property type="match status" value="1"/>
</dbReference>
<dbReference type="Gene3D" id="3.40.50.1100">
    <property type="match status" value="2"/>
</dbReference>
<dbReference type="HAMAP" id="MF_00133">
    <property type="entry name" value="Trp_synth_beta"/>
    <property type="match status" value="1"/>
</dbReference>
<dbReference type="InterPro" id="IPR006653">
    <property type="entry name" value="Trp_synth_b_CS"/>
</dbReference>
<dbReference type="InterPro" id="IPR006654">
    <property type="entry name" value="Trp_synth_beta"/>
</dbReference>
<dbReference type="InterPro" id="IPR023026">
    <property type="entry name" value="Trp_synth_beta/beta-like"/>
</dbReference>
<dbReference type="InterPro" id="IPR001926">
    <property type="entry name" value="TrpB-like_PALP"/>
</dbReference>
<dbReference type="InterPro" id="IPR036052">
    <property type="entry name" value="TrpB-like_PALP_sf"/>
</dbReference>
<dbReference type="NCBIfam" id="TIGR00263">
    <property type="entry name" value="trpB"/>
    <property type="match status" value="1"/>
</dbReference>
<dbReference type="PANTHER" id="PTHR48077:SF3">
    <property type="entry name" value="TRYPTOPHAN SYNTHASE"/>
    <property type="match status" value="1"/>
</dbReference>
<dbReference type="PANTHER" id="PTHR48077">
    <property type="entry name" value="TRYPTOPHAN SYNTHASE-RELATED"/>
    <property type="match status" value="1"/>
</dbReference>
<dbReference type="Pfam" id="PF00291">
    <property type="entry name" value="PALP"/>
    <property type="match status" value="1"/>
</dbReference>
<dbReference type="PIRSF" id="PIRSF001413">
    <property type="entry name" value="Trp_syn_beta"/>
    <property type="match status" value="1"/>
</dbReference>
<dbReference type="SUPFAM" id="SSF53686">
    <property type="entry name" value="Tryptophan synthase beta subunit-like PLP-dependent enzymes"/>
    <property type="match status" value="1"/>
</dbReference>
<dbReference type="PROSITE" id="PS00168">
    <property type="entry name" value="TRP_SYNTHASE_BETA"/>
    <property type="match status" value="1"/>
</dbReference>
<keyword id="KW-0028">Amino-acid biosynthesis</keyword>
<keyword id="KW-0057">Aromatic amino acid biosynthesis</keyword>
<keyword id="KW-0456">Lyase</keyword>
<keyword id="KW-0663">Pyridoxal phosphate</keyword>
<keyword id="KW-1185">Reference proteome</keyword>
<keyword id="KW-0822">Tryptophan biosynthesis</keyword>
<evidence type="ECO:0000255" key="1">
    <source>
        <dbReference type="HAMAP-Rule" id="MF_00133"/>
    </source>
</evidence>
<sequence length="402" mass="43834">MKIQTEVDELGFFGEYGGQYVPETLMPAIIELKKAYEDAKSDTHFKKEFNYYLSEYVGRETPLTFAESYTKLLGGAKIYLKREDLNHTGAHKINNAIGQALLAKRMGKTKLVAETGAGQHGVASATIAALFDMDLIVFMGSEDIKRQQLNVFRMELLGAKVVSVSDGQGTLSDAVNKALQYWVNHVEDTHYLLGSALGPDPFPTMVRDFQSVIGNEIKSQILSKEGRLPDALVACVGGGSNSIGTFYPFIQDDVKLYGVEAAGKGSHTHNHALAIGKGKPGVLHGSKMYLIQNDDGQIELAHSISAGLDYPGIGPEHSYYNDIGRVSYVSATDNEAMEALITFSKVEGIIPAIESAHALSYVEKLAPNMDEKEIIVVTISGRGDKDMETIKQYKENGGEQNE</sequence>